<name>HIS1_BACMK</name>
<gene>
    <name evidence="1" type="primary">hisG</name>
    <name type="ordered locus">BcerKBAB4_1327</name>
</gene>
<comment type="function">
    <text evidence="1">Catalyzes the condensation of ATP and 5-phosphoribose 1-diphosphate to form N'-(5'-phosphoribosyl)-ATP (PR-ATP). Has a crucial role in the pathway because the rate of histidine biosynthesis seems to be controlled primarily by regulation of HisG enzymatic activity.</text>
</comment>
<comment type="catalytic activity">
    <reaction evidence="1">
        <text>1-(5-phospho-beta-D-ribosyl)-ATP + diphosphate = 5-phospho-alpha-D-ribose 1-diphosphate + ATP</text>
        <dbReference type="Rhea" id="RHEA:18473"/>
        <dbReference type="ChEBI" id="CHEBI:30616"/>
        <dbReference type="ChEBI" id="CHEBI:33019"/>
        <dbReference type="ChEBI" id="CHEBI:58017"/>
        <dbReference type="ChEBI" id="CHEBI:73183"/>
        <dbReference type="EC" id="2.4.2.17"/>
    </reaction>
</comment>
<comment type="pathway">
    <text evidence="1">Amino-acid biosynthesis; L-histidine biosynthesis; L-histidine from 5-phospho-alpha-D-ribose 1-diphosphate: step 1/9.</text>
</comment>
<comment type="subunit">
    <text evidence="1">Heteromultimer composed of HisG and HisZ subunits.</text>
</comment>
<comment type="subcellular location">
    <subcellularLocation>
        <location evidence="1">Cytoplasm</location>
    </subcellularLocation>
</comment>
<comment type="domain">
    <text>Lacks the C-terminal regulatory region which is replaced by HisZ.</text>
</comment>
<comment type="similarity">
    <text evidence="1">Belongs to the ATP phosphoribosyltransferase family. Short subfamily.</text>
</comment>
<keyword id="KW-0028">Amino-acid biosynthesis</keyword>
<keyword id="KW-0067">ATP-binding</keyword>
<keyword id="KW-0963">Cytoplasm</keyword>
<keyword id="KW-0328">Glycosyltransferase</keyword>
<keyword id="KW-0368">Histidine biosynthesis</keyword>
<keyword id="KW-0547">Nucleotide-binding</keyword>
<keyword id="KW-0808">Transferase</keyword>
<organism>
    <name type="scientific">Bacillus mycoides (strain KBAB4)</name>
    <name type="common">Bacillus weihenstephanensis</name>
    <dbReference type="NCBI Taxonomy" id="315730"/>
    <lineage>
        <taxon>Bacteria</taxon>
        <taxon>Bacillati</taxon>
        <taxon>Bacillota</taxon>
        <taxon>Bacilli</taxon>
        <taxon>Bacillales</taxon>
        <taxon>Bacillaceae</taxon>
        <taxon>Bacillus</taxon>
        <taxon>Bacillus cereus group</taxon>
    </lineage>
</organism>
<reference key="1">
    <citation type="journal article" date="2008" name="Chem. Biol. Interact.">
        <title>Extending the Bacillus cereus group genomics to putative food-borne pathogens of different toxicity.</title>
        <authorList>
            <person name="Lapidus A."/>
            <person name="Goltsman E."/>
            <person name="Auger S."/>
            <person name="Galleron N."/>
            <person name="Segurens B."/>
            <person name="Dossat C."/>
            <person name="Land M.L."/>
            <person name="Broussolle V."/>
            <person name="Brillard J."/>
            <person name="Guinebretiere M.-H."/>
            <person name="Sanchis V."/>
            <person name="Nguen-the C."/>
            <person name="Lereclus D."/>
            <person name="Richardson P."/>
            <person name="Wincker P."/>
            <person name="Weissenbach J."/>
            <person name="Ehrlich S.D."/>
            <person name="Sorokin A."/>
        </authorList>
    </citation>
    <scope>NUCLEOTIDE SEQUENCE [LARGE SCALE GENOMIC DNA]</scope>
    <source>
        <strain>KBAB4</strain>
    </source>
</reference>
<evidence type="ECO:0000255" key="1">
    <source>
        <dbReference type="HAMAP-Rule" id="MF_01018"/>
    </source>
</evidence>
<feature type="chain" id="PRO_1000135270" description="ATP phosphoribosyltransferase">
    <location>
        <begin position="1"/>
        <end position="211"/>
    </location>
</feature>
<accession>A9VLH2</accession>
<proteinExistence type="inferred from homology"/>
<protein>
    <recommendedName>
        <fullName evidence="1">ATP phosphoribosyltransferase</fullName>
        <shortName evidence="1">ATP-PRT</shortName>
        <shortName evidence="1">ATP-PRTase</shortName>
        <ecNumber evidence="1">2.4.2.17</ecNumber>
    </recommendedName>
</protein>
<sequence length="211" mass="23596">MRNIQIALTKGRLEKHVIPLFEKIGIGCSELKDKGRKLVFKSKNTNISFILVKAVDVATYVEHGVADIGVVGKDILMEFEKDIYEMVDLGVGVCKFCVASIPTYNPKSYRKKRIATKYPHITSTYFHDKGEDVEIIKIEGSVEIAPLLGLADAIVDIVETGKTLQENGLIVFEEMCSISARMIVNKAALKTKKDEIFRIINMMEQEILSGK</sequence>
<dbReference type="EC" id="2.4.2.17" evidence="1"/>
<dbReference type="EMBL" id="CP000903">
    <property type="protein sequence ID" value="ABY42574.1"/>
    <property type="molecule type" value="Genomic_DNA"/>
</dbReference>
<dbReference type="RefSeq" id="WP_012260614.1">
    <property type="nucleotide sequence ID" value="NC_010184.1"/>
</dbReference>
<dbReference type="SMR" id="A9VLH2"/>
<dbReference type="KEGG" id="bwe:BcerKBAB4_1327"/>
<dbReference type="eggNOG" id="COG0040">
    <property type="taxonomic scope" value="Bacteria"/>
</dbReference>
<dbReference type="HOGENOM" id="CLU_038115_2_0_9"/>
<dbReference type="UniPathway" id="UPA00031">
    <property type="reaction ID" value="UER00006"/>
</dbReference>
<dbReference type="Proteomes" id="UP000002154">
    <property type="component" value="Chromosome"/>
</dbReference>
<dbReference type="GO" id="GO:0005737">
    <property type="term" value="C:cytoplasm"/>
    <property type="evidence" value="ECO:0007669"/>
    <property type="project" value="UniProtKB-SubCell"/>
</dbReference>
<dbReference type="GO" id="GO:0005524">
    <property type="term" value="F:ATP binding"/>
    <property type="evidence" value="ECO:0007669"/>
    <property type="project" value="UniProtKB-KW"/>
</dbReference>
<dbReference type="GO" id="GO:0003879">
    <property type="term" value="F:ATP phosphoribosyltransferase activity"/>
    <property type="evidence" value="ECO:0007669"/>
    <property type="project" value="UniProtKB-UniRule"/>
</dbReference>
<dbReference type="GO" id="GO:0000105">
    <property type="term" value="P:L-histidine biosynthetic process"/>
    <property type="evidence" value="ECO:0007669"/>
    <property type="project" value="UniProtKB-UniRule"/>
</dbReference>
<dbReference type="CDD" id="cd13595">
    <property type="entry name" value="PBP2_HisGs"/>
    <property type="match status" value="1"/>
</dbReference>
<dbReference type="FunFam" id="3.40.190.10:FF:000011">
    <property type="entry name" value="ATP phosphoribosyltransferase"/>
    <property type="match status" value="1"/>
</dbReference>
<dbReference type="Gene3D" id="3.40.190.10">
    <property type="entry name" value="Periplasmic binding protein-like II"/>
    <property type="match status" value="2"/>
</dbReference>
<dbReference type="HAMAP" id="MF_01018">
    <property type="entry name" value="HisG_Short"/>
    <property type="match status" value="1"/>
</dbReference>
<dbReference type="InterPro" id="IPR013820">
    <property type="entry name" value="ATP_PRibTrfase_cat"/>
</dbReference>
<dbReference type="InterPro" id="IPR018198">
    <property type="entry name" value="ATP_PRibTrfase_CS"/>
</dbReference>
<dbReference type="InterPro" id="IPR001348">
    <property type="entry name" value="ATP_PRibTrfase_HisG"/>
</dbReference>
<dbReference type="InterPro" id="IPR024893">
    <property type="entry name" value="ATP_PRibTrfase_HisG_short"/>
</dbReference>
<dbReference type="NCBIfam" id="TIGR00070">
    <property type="entry name" value="hisG"/>
    <property type="match status" value="1"/>
</dbReference>
<dbReference type="PANTHER" id="PTHR21403:SF8">
    <property type="entry name" value="ATP PHOSPHORIBOSYLTRANSFERASE"/>
    <property type="match status" value="1"/>
</dbReference>
<dbReference type="PANTHER" id="PTHR21403">
    <property type="entry name" value="ATP PHOSPHORIBOSYLTRANSFERASE ATP-PRTASE"/>
    <property type="match status" value="1"/>
</dbReference>
<dbReference type="Pfam" id="PF01634">
    <property type="entry name" value="HisG"/>
    <property type="match status" value="1"/>
</dbReference>
<dbReference type="SUPFAM" id="SSF53850">
    <property type="entry name" value="Periplasmic binding protein-like II"/>
    <property type="match status" value="1"/>
</dbReference>
<dbReference type="PROSITE" id="PS01316">
    <property type="entry name" value="ATP_P_PHORIBOSYLTR"/>
    <property type="match status" value="1"/>
</dbReference>